<protein>
    <recommendedName>
        <fullName evidence="1">S-adenosylmethionine synthase</fullName>
        <shortName evidence="1">AdoMet synthase</shortName>
        <ecNumber evidence="1">2.5.1.6</ecNumber>
    </recommendedName>
    <alternativeName>
        <fullName evidence="1">MAT</fullName>
    </alternativeName>
    <alternativeName>
        <fullName evidence="1">Methionine adenosyltransferase</fullName>
    </alternativeName>
</protein>
<sequence>MKRLFTSESVTEGHPDKVADQISDAILDAMLEQDPKSRVAVETLVTTGIAIVSGEVTTRAYVDIQDIVRKTILDIGYTRAKYGFDGETCAVLSSIHSQSPDIALGVDKALEAKEGELIAEDELEQVGAGDQGMMFGYATNETKEYMPLPIMLSHKLAMKLSEVRKNGTLPFLRPDGKTQVTIEYDENDKPVRVDTVLISTQHEPDVTISEIKEALIKHVIDPIIPEELRDDKMKILVNPTGRFVLGGPSADTGLTGRKIIVDTYGGAVPHGGGAFSGKDPTKVDRSAHYFARYVAKNVVAAGLADKFMIQVAYAIGKAQPVSVMINTFGTAKTDEDKILKAILEIFDFRPGAIIKKLDLLRPIYKKTAAYGHFGRELEEFTWEKLDMVNELKKIL</sequence>
<dbReference type="EC" id="2.5.1.6" evidence="1"/>
<dbReference type="EMBL" id="CP001185">
    <property type="protein sequence ID" value="ACJ74616.1"/>
    <property type="molecule type" value="Genomic_DNA"/>
</dbReference>
<dbReference type="RefSeq" id="WP_012579352.1">
    <property type="nucleotide sequence ID" value="NC_011653.1"/>
</dbReference>
<dbReference type="SMR" id="B7IEV2"/>
<dbReference type="STRING" id="484019.THA_108"/>
<dbReference type="KEGG" id="taf:THA_108"/>
<dbReference type="eggNOG" id="COG0192">
    <property type="taxonomic scope" value="Bacteria"/>
</dbReference>
<dbReference type="HOGENOM" id="CLU_041802_1_1_0"/>
<dbReference type="OrthoDB" id="9801686at2"/>
<dbReference type="UniPathway" id="UPA00315">
    <property type="reaction ID" value="UER00080"/>
</dbReference>
<dbReference type="Proteomes" id="UP000002453">
    <property type="component" value="Chromosome"/>
</dbReference>
<dbReference type="GO" id="GO:0005737">
    <property type="term" value="C:cytoplasm"/>
    <property type="evidence" value="ECO:0007669"/>
    <property type="project" value="UniProtKB-SubCell"/>
</dbReference>
<dbReference type="GO" id="GO:0005524">
    <property type="term" value="F:ATP binding"/>
    <property type="evidence" value="ECO:0007669"/>
    <property type="project" value="UniProtKB-UniRule"/>
</dbReference>
<dbReference type="GO" id="GO:0000287">
    <property type="term" value="F:magnesium ion binding"/>
    <property type="evidence" value="ECO:0007669"/>
    <property type="project" value="UniProtKB-UniRule"/>
</dbReference>
<dbReference type="GO" id="GO:0004478">
    <property type="term" value="F:methionine adenosyltransferase activity"/>
    <property type="evidence" value="ECO:0007669"/>
    <property type="project" value="UniProtKB-UniRule"/>
</dbReference>
<dbReference type="GO" id="GO:0006730">
    <property type="term" value="P:one-carbon metabolic process"/>
    <property type="evidence" value="ECO:0007669"/>
    <property type="project" value="UniProtKB-KW"/>
</dbReference>
<dbReference type="GO" id="GO:0006556">
    <property type="term" value="P:S-adenosylmethionine biosynthetic process"/>
    <property type="evidence" value="ECO:0007669"/>
    <property type="project" value="UniProtKB-UniRule"/>
</dbReference>
<dbReference type="CDD" id="cd18079">
    <property type="entry name" value="S-AdoMet_synt"/>
    <property type="match status" value="1"/>
</dbReference>
<dbReference type="FunFam" id="3.30.300.10:FF:000003">
    <property type="entry name" value="S-adenosylmethionine synthase"/>
    <property type="match status" value="1"/>
</dbReference>
<dbReference type="Gene3D" id="3.30.300.10">
    <property type="match status" value="3"/>
</dbReference>
<dbReference type="HAMAP" id="MF_00086">
    <property type="entry name" value="S_AdoMet_synth1"/>
    <property type="match status" value="1"/>
</dbReference>
<dbReference type="InterPro" id="IPR022631">
    <property type="entry name" value="ADOMET_SYNTHASE_CS"/>
</dbReference>
<dbReference type="InterPro" id="IPR022630">
    <property type="entry name" value="S-AdoMet_synt_C"/>
</dbReference>
<dbReference type="InterPro" id="IPR022629">
    <property type="entry name" value="S-AdoMet_synt_central"/>
</dbReference>
<dbReference type="InterPro" id="IPR022628">
    <property type="entry name" value="S-AdoMet_synt_N"/>
</dbReference>
<dbReference type="InterPro" id="IPR002133">
    <property type="entry name" value="S-AdoMet_synthetase"/>
</dbReference>
<dbReference type="InterPro" id="IPR022636">
    <property type="entry name" value="S-AdoMet_synthetase_sfam"/>
</dbReference>
<dbReference type="NCBIfam" id="TIGR01034">
    <property type="entry name" value="metK"/>
    <property type="match status" value="1"/>
</dbReference>
<dbReference type="PANTHER" id="PTHR11964">
    <property type="entry name" value="S-ADENOSYLMETHIONINE SYNTHETASE"/>
    <property type="match status" value="1"/>
</dbReference>
<dbReference type="Pfam" id="PF02773">
    <property type="entry name" value="S-AdoMet_synt_C"/>
    <property type="match status" value="1"/>
</dbReference>
<dbReference type="Pfam" id="PF02772">
    <property type="entry name" value="S-AdoMet_synt_M"/>
    <property type="match status" value="1"/>
</dbReference>
<dbReference type="Pfam" id="PF00438">
    <property type="entry name" value="S-AdoMet_synt_N"/>
    <property type="match status" value="1"/>
</dbReference>
<dbReference type="PIRSF" id="PIRSF000497">
    <property type="entry name" value="MAT"/>
    <property type="match status" value="1"/>
</dbReference>
<dbReference type="SUPFAM" id="SSF55973">
    <property type="entry name" value="S-adenosylmethionine synthetase"/>
    <property type="match status" value="3"/>
</dbReference>
<dbReference type="PROSITE" id="PS00376">
    <property type="entry name" value="ADOMET_SYNTHASE_1"/>
    <property type="match status" value="1"/>
</dbReference>
<dbReference type="PROSITE" id="PS00377">
    <property type="entry name" value="ADOMET_SYNTHASE_2"/>
    <property type="match status" value="1"/>
</dbReference>
<gene>
    <name evidence="1" type="primary">metK</name>
    <name type="ordered locus">THA_108</name>
</gene>
<reference key="1">
    <citation type="journal article" date="2009" name="J. Bacteriol.">
        <title>The genome of Thermosipho africanus TCF52B: lateral genetic connections to the Firmicutes and Archaea.</title>
        <authorList>
            <person name="Nesboe C.L."/>
            <person name="Bapteste E."/>
            <person name="Curtis B."/>
            <person name="Dahle H."/>
            <person name="Lopez P."/>
            <person name="Macleod D."/>
            <person name="Dlutek M."/>
            <person name="Bowman S."/>
            <person name="Zhaxybayeva O."/>
            <person name="Birkeland N.-K."/>
            <person name="Doolittle W.F."/>
        </authorList>
    </citation>
    <scope>NUCLEOTIDE SEQUENCE [LARGE SCALE GENOMIC DNA]</scope>
    <source>
        <strain>TCF52B</strain>
    </source>
</reference>
<organism>
    <name type="scientific">Thermosipho africanus (strain TCF52B)</name>
    <dbReference type="NCBI Taxonomy" id="484019"/>
    <lineage>
        <taxon>Bacteria</taxon>
        <taxon>Thermotogati</taxon>
        <taxon>Thermotogota</taxon>
        <taxon>Thermotogae</taxon>
        <taxon>Thermotogales</taxon>
        <taxon>Fervidobacteriaceae</taxon>
        <taxon>Thermosipho</taxon>
    </lineage>
</organism>
<comment type="function">
    <text evidence="1">Catalyzes the formation of S-adenosylmethionine (AdoMet) from methionine and ATP. The overall synthetic reaction is composed of two sequential steps, AdoMet formation and the subsequent tripolyphosphate hydrolysis which occurs prior to release of AdoMet from the enzyme.</text>
</comment>
<comment type="catalytic activity">
    <reaction evidence="1">
        <text>L-methionine + ATP + H2O = S-adenosyl-L-methionine + phosphate + diphosphate</text>
        <dbReference type="Rhea" id="RHEA:21080"/>
        <dbReference type="ChEBI" id="CHEBI:15377"/>
        <dbReference type="ChEBI" id="CHEBI:30616"/>
        <dbReference type="ChEBI" id="CHEBI:33019"/>
        <dbReference type="ChEBI" id="CHEBI:43474"/>
        <dbReference type="ChEBI" id="CHEBI:57844"/>
        <dbReference type="ChEBI" id="CHEBI:59789"/>
        <dbReference type="EC" id="2.5.1.6"/>
    </reaction>
</comment>
<comment type="cofactor">
    <cofactor evidence="1">
        <name>Mg(2+)</name>
        <dbReference type="ChEBI" id="CHEBI:18420"/>
    </cofactor>
    <text evidence="1">Binds 2 divalent ions per subunit.</text>
</comment>
<comment type="cofactor">
    <cofactor evidence="1">
        <name>K(+)</name>
        <dbReference type="ChEBI" id="CHEBI:29103"/>
    </cofactor>
    <text evidence="1">Binds 1 potassium ion per subunit.</text>
</comment>
<comment type="pathway">
    <text evidence="1">Amino-acid biosynthesis; S-adenosyl-L-methionine biosynthesis; S-adenosyl-L-methionine from L-methionine: step 1/1.</text>
</comment>
<comment type="subunit">
    <text evidence="1">Homotetramer; dimer of dimers.</text>
</comment>
<comment type="subcellular location">
    <subcellularLocation>
        <location evidence="1">Cytoplasm</location>
    </subcellularLocation>
</comment>
<comment type="similarity">
    <text evidence="1">Belongs to the AdoMet synthase family.</text>
</comment>
<accession>B7IEV2</accession>
<proteinExistence type="inferred from homology"/>
<evidence type="ECO:0000255" key="1">
    <source>
        <dbReference type="HAMAP-Rule" id="MF_00086"/>
    </source>
</evidence>
<feature type="chain" id="PRO_1000196734" description="S-adenosylmethionine synthase">
    <location>
        <begin position="1"/>
        <end position="395"/>
    </location>
</feature>
<feature type="region of interest" description="Flexible loop" evidence="1">
    <location>
        <begin position="98"/>
        <end position="108"/>
    </location>
</feature>
<feature type="binding site" description="in other chain" evidence="1">
    <location>
        <position position="14"/>
    </location>
    <ligand>
        <name>ATP</name>
        <dbReference type="ChEBI" id="CHEBI:30616"/>
        <note>ligand shared between two neighboring subunits</note>
    </ligand>
</feature>
<feature type="binding site" evidence="1">
    <location>
        <position position="16"/>
    </location>
    <ligand>
        <name>Mg(2+)</name>
        <dbReference type="ChEBI" id="CHEBI:18420"/>
    </ligand>
</feature>
<feature type="binding site" evidence="1">
    <location>
        <position position="42"/>
    </location>
    <ligand>
        <name>K(+)</name>
        <dbReference type="ChEBI" id="CHEBI:29103"/>
    </ligand>
</feature>
<feature type="binding site" description="in other chain" evidence="1">
    <location>
        <position position="55"/>
    </location>
    <ligand>
        <name>L-methionine</name>
        <dbReference type="ChEBI" id="CHEBI:57844"/>
        <note>ligand shared between two neighboring subunits</note>
    </ligand>
</feature>
<feature type="binding site" description="in other chain" evidence="1">
    <location>
        <position position="98"/>
    </location>
    <ligand>
        <name>L-methionine</name>
        <dbReference type="ChEBI" id="CHEBI:57844"/>
        <note>ligand shared between two neighboring subunits</note>
    </ligand>
</feature>
<feature type="binding site" description="in other chain" evidence="1">
    <location>
        <begin position="175"/>
        <end position="177"/>
    </location>
    <ligand>
        <name>ATP</name>
        <dbReference type="ChEBI" id="CHEBI:30616"/>
        <note>ligand shared between two neighboring subunits</note>
    </ligand>
</feature>
<feature type="binding site" description="in other chain" evidence="1">
    <location>
        <begin position="242"/>
        <end position="243"/>
    </location>
    <ligand>
        <name>ATP</name>
        <dbReference type="ChEBI" id="CHEBI:30616"/>
        <note>ligand shared between two neighboring subunits</note>
    </ligand>
</feature>
<feature type="binding site" evidence="1">
    <location>
        <position position="251"/>
    </location>
    <ligand>
        <name>ATP</name>
        <dbReference type="ChEBI" id="CHEBI:30616"/>
        <note>ligand shared between two neighboring subunits</note>
    </ligand>
</feature>
<feature type="binding site" evidence="1">
    <location>
        <position position="251"/>
    </location>
    <ligand>
        <name>L-methionine</name>
        <dbReference type="ChEBI" id="CHEBI:57844"/>
        <note>ligand shared between two neighboring subunits</note>
    </ligand>
</feature>
<feature type="binding site" description="in other chain" evidence="1">
    <location>
        <begin position="257"/>
        <end position="258"/>
    </location>
    <ligand>
        <name>ATP</name>
        <dbReference type="ChEBI" id="CHEBI:30616"/>
        <note>ligand shared between two neighboring subunits</note>
    </ligand>
</feature>
<feature type="binding site" evidence="1">
    <location>
        <position position="274"/>
    </location>
    <ligand>
        <name>ATP</name>
        <dbReference type="ChEBI" id="CHEBI:30616"/>
        <note>ligand shared between two neighboring subunits</note>
    </ligand>
</feature>
<feature type="binding site" evidence="1">
    <location>
        <position position="278"/>
    </location>
    <ligand>
        <name>ATP</name>
        <dbReference type="ChEBI" id="CHEBI:30616"/>
        <note>ligand shared between two neighboring subunits</note>
    </ligand>
</feature>
<feature type="binding site" description="in other chain" evidence="1">
    <location>
        <position position="282"/>
    </location>
    <ligand>
        <name>L-methionine</name>
        <dbReference type="ChEBI" id="CHEBI:57844"/>
        <note>ligand shared between two neighboring subunits</note>
    </ligand>
</feature>
<keyword id="KW-0067">ATP-binding</keyword>
<keyword id="KW-0963">Cytoplasm</keyword>
<keyword id="KW-0460">Magnesium</keyword>
<keyword id="KW-0479">Metal-binding</keyword>
<keyword id="KW-0547">Nucleotide-binding</keyword>
<keyword id="KW-0554">One-carbon metabolism</keyword>
<keyword id="KW-0630">Potassium</keyword>
<keyword id="KW-1185">Reference proteome</keyword>
<keyword id="KW-0808">Transferase</keyword>
<name>METK_THEAB</name>